<evidence type="ECO:0000255" key="1">
    <source>
        <dbReference type="HAMAP-Rule" id="MF_00455"/>
    </source>
</evidence>
<accession>A4W566</accession>
<organism>
    <name type="scientific">Enterobacter sp. (strain 638)</name>
    <dbReference type="NCBI Taxonomy" id="399742"/>
    <lineage>
        <taxon>Bacteria</taxon>
        <taxon>Pseudomonadati</taxon>
        <taxon>Pseudomonadota</taxon>
        <taxon>Gammaproteobacteria</taxon>
        <taxon>Enterobacterales</taxon>
        <taxon>Enterobacteriaceae</taxon>
        <taxon>Enterobacter</taxon>
    </lineage>
</organism>
<comment type="catalytic activity">
    <reaction evidence="1">
        <text>alpha-D-xylose = alpha-D-xylulofuranose</text>
        <dbReference type="Rhea" id="RHEA:22816"/>
        <dbReference type="ChEBI" id="CHEBI:28518"/>
        <dbReference type="ChEBI" id="CHEBI:188998"/>
        <dbReference type="EC" id="5.3.1.5"/>
    </reaction>
</comment>
<comment type="cofactor">
    <cofactor evidence="1">
        <name>Mg(2+)</name>
        <dbReference type="ChEBI" id="CHEBI:18420"/>
    </cofactor>
    <text evidence="1">Binds 2 magnesium ions per subunit.</text>
</comment>
<comment type="subunit">
    <text evidence="1">Homotetramer.</text>
</comment>
<comment type="subcellular location">
    <subcellularLocation>
        <location evidence="1">Cytoplasm</location>
    </subcellularLocation>
</comment>
<comment type="similarity">
    <text evidence="1">Belongs to the xylose isomerase family.</text>
</comment>
<sequence length="440" mass="49818">MQAYFDQLDRVRYEGPKSTNPLAFRHYNPDELVLGKRMEDHLRFAACYWHTFCWNGADMFGVGSFDRPWQQPGEALELAKRKADVAFEFFHKLNVPYYCFHDVDVSPEGASLKEYLNNFAQMVDYLGEKQQQSGVKLLWGTANCFTNPRYGAGAATNPDPEVFSWAATQVVTAMNATHKLGGENYVLWGGREGYETLLNTDLRQEREQIGRFMQMVVEHKHKIGFRGTLLIEPKPQEPTKHQYDYDVATVYGFLKQFGLEKEIKVNIEANHATLAGHSFHHEIASAIALGIFGSVDANRGDPQLGWDTDQFPISVEENALVMYEIIKAGGFTTGGLNFDAKVRRQSTDKYDLFYGHIGAMDTMALALKVAARMIEDGELDKRVAKRYAGWNSELGQQILKGQLSLAEIAKYAEQHSLAPSHQSGHQELLENLVNHYLFDK</sequence>
<keyword id="KW-0119">Carbohydrate metabolism</keyword>
<keyword id="KW-0963">Cytoplasm</keyword>
<keyword id="KW-0413">Isomerase</keyword>
<keyword id="KW-0460">Magnesium</keyword>
<keyword id="KW-0479">Metal-binding</keyword>
<keyword id="KW-0859">Xylose metabolism</keyword>
<protein>
    <recommendedName>
        <fullName evidence="1">Xylose isomerase</fullName>
        <ecNumber evidence="1">5.3.1.5</ecNumber>
    </recommendedName>
</protein>
<proteinExistence type="inferred from homology"/>
<dbReference type="EC" id="5.3.1.5" evidence="1"/>
<dbReference type="EMBL" id="CP000653">
    <property type="protein sequence ID" value="ABP58846.1"/>
    <property type="molecule type" value="Genomic_DNA"/>
</dbReference>
<dbReference type="RefSeq" id="WP_011915422.1">
    <property type="nucleotide sequence ID" value="NC_009436.1"/>
</dbReference>
<dbReference type="SMR" id="A4W566"/>
<dbReference type="STRING" id="399742.Ent638_0156"/>
<dbReference type="GeneID" id="93307330"/>
<dbReference type="KEGG" id="ent:Ent638_0156"/>
<dbReference type="eggNOG" id="COG2115">
    <property type="taxonomic scope" value="Bacteria"/>
</dbReference>
<dbReference type="HOGENOM" id="CLU_037261_1_0_6"/>
<dbReference type="OrthoDB" id="9763981at2"/>
<dbReference type="Proteomes" id="UP000000230">
    <property type="component" value="Chromosome"/>
</dbReference>
<dbReference type="GO" id="GO:0005737">
    <property type="term" value="C:cytoplasm"/>
    <property type="evidence" value="ECO:0007669"/>
    <property type="project" value="UniProtKB-SubCell"/>
</dbReference>
<dbReference type="GO" id="GO:0000287">
    <property type="term" value="F:magnesium ion binding"/>
    <property type="evidence" value="ECO:0007669"/>
    <property type="project" value="UniProtKB-UniRule"/>
</dbReference>
<dbReference type="GO" id="GO:0009045">
    <property type="term" value="F:xylose isomerase activity"/>
    <property type="evidence" value="ECO:0007669"/>
    <property type="project" value="UniProtKB-UniRule"/>
</dbReference>
<dbReference type="GO" id="GO:0042732">
    <property type="term" value="P:D-xylose metabolic process"/>
    <property type="evidence" value="ECO:0007669"/>
    <property type="project" value="UniProtKB-UniRule"/>
</dbReference>
<dbReference type="FunFam" id="3.20.20.150:FF:000002">
    <property type="entry name" value="Xylose isomerase"/>
    <property type="match status" value="1"/>
</dbReference>
<dbReference type="Gene3D" id="3.20.20.150">
    <property type="entry name" value="Divalent-metal-dependent TIM barrel enzymes"/>
    <property type="match status" value="1"/>
</dbReference>
<dbReference type="HAMAP" id="MF_00455">
    <property type="entry name" value="Xylose_isom_A"/>
    <property type="match status" value="1"/>
</dbReference>
<dbReference type="InterPro" id="IPR036237">
    <property type="entry name" value="Xyl_isomerase-like_sf"/>
</dbReference>
<dbReference type="InterPro" id="IPR013452">
    <property type="entry name" value="Xylose_isom_bac"/>
</dbReference>
<dbReference type="InterPro" id="IPR001998">
    <property type="entry name" value="Xylose_isomerase"/>
</dbReference>
<dbReference type="NCBIfam" id="NF003998">
    <property type="entry name" value="PRK05474.1"/>
    <property type="match status" value="1"/>
</dbReference>
<dbReference type="NCBIfam" id="TIGR02630">
    <property type="entry name" value="xylose_isom_A"/>
    <property type="match status" value="1"/>
</dbReference>
<dbReference type="PANTHER" id="PTHR48408">
    <property type="match status" value="1"/>
</dbReference>
<dbReference type="PANTHER" id="PTHR48408:SF1">
    <property type="entry name" value="XYLOSE ISOMERASE"/>
    <property type="match status" value="1"/>
</dbReference>
<dbReference type="PRINTS" id="PR00688">
    <property type="entry name" value="XYLOSISMRASE"/>
</dbReference>
<dbReference type="SUPFAM" id="SSF51658">
    <property type="entry name" value="Xylose isomerase-like"/>
    <property type="match status" value="1"/>
</dbReference>
<dbReference type="PROSITE" id="PS51415">
    <property type="entry name" value="XYLOSE_ISOMERASE"/>
    <property type="match status" value="1"/>
</dbReference>
<feature type="chain" id="PRO_1000060321" description="Xylose isomerase">
    <location>
        <begin position="1"/>
        <end position="440"/>
    </location>
</feature>
<feature type="active site" evidence="1">
    <location>
        <position position="101"/>
    </location>
</feature>
<feature type="active site" evidence="1">
    <location>
        <position position="104"/>
    </location>
</feature>
<feature type="binding site" evidence="1">
    <location>
        <position position="232"/>
    </location>
    <ligand>
        <name>Mg(2+)</name>
        <dbReference type="ChEBI" id="CHEBI:18420"/>
        <label>1</label>
    </ligand>
</feature>
<feature type="binding site" evidence="1">
    <location>
        <position position="268"/>
    </location>
    <ligand>
        <name>Mg(2+)</name>
        <dbReference type="ChEBI" id="CHEBI:18420"/>
        <label>1</label>
    </ligand>
</feature>
<feature type="binding site" evidence="1">
    <location>
        <position position="268"/>
    </location>
    <ligand>
        <name>Mg(2+)</name>
        <dbReference type="ChEBI" id="CHEBI:18420"/>
        <label>2</label>
    </ligand>
</feature>
<feature type="binding site" evidence="1">
    <location>
        <position position="271"/>
    </location>
    <ligand>
        <name>Mg(2+)</name>
        <dbReference type="ChEBI" id="CHEBI:18420"/>
        <label>2</label>
    </ligand>
</feature>
<feature type="binding site" evidence="1">
    <location>
        <position position="296"/>
    </location>
    <ligand>
        <name>Mg(2+)</name>
        <dbReference type="ChEBI" id="CHEBI:18420"/>
        <label>1</label>
    </ligand>
</feature>
<feature type="binding site" evidence="1">
    <location>
        <position position="307"/>
    </location>
    <ligand>
        <name>Mg(2+)</name>
        <dbReference type="ChEBI" id="CHEBI:18420"/>
        <label>2</label>
    </ligand>
</feature>
<feature type="binding site" evidence="1">
    <location>
        <position position="309"/>
    </location>
    <ligand>
        <name>Mg(2+)</name>
        <dbReference type="ChEBI" id="CHEBI:18420"/>
        <label>2</label>
    </ligand>
</feature>
<feature type="binding site" evidence="1">
    <location>
        <position position="339"/>
    </location>
    <ligand>
        <name>Mg(2+)</name>
        <dbReference type="ChEBI" id="CHEBI:18420"/>
        <label>1</label>
    </ligand>
</feature>
<reference key="1">
    <citation type="journal article" date="2010" name="PLoS Genet.">
        <title>Genome sequence of the plant growth promoting endophytic bacterium Enterobacter sp. 638.</title>
        <authorList>
            <person name="Taghavi S."/>
            <person name="van der Lelie D."/>
            <person name="Hoffman A."/>
            <person name="Zhang Y.B."/>
            <person name="Walla M.D."/>
            <person name="Vangronsveld J."/>
            <person name="Newman L."/>
            <person name="Monchy S."/>
        </authorList>
    </citation>
    <scope>NUCLEOTIDE SEQUENCE [LARGE SCALE GENOMIC DNA]</scope>
    <source>
        <strain>638</strain>
    </source>
</reference>
<gene>
    <name evidence="1" type="primary">xylA</name>
    <name type="ordered locus">Ent638_0156</name>
</gene>
<name>XYLA_ENT38</name>